<dbReference type="EC" id="2.5.1.7" evidence="1"/>
<dbReference type="EMBL" id="BX571965">
    <property type="protein sequence ID" value="CAH37151.1"/>
    <property type="molecule type" value="Genomic_DNA"/>
</dbReference>
<dbReference type="RefSeq" id="WP_004527889.1">
    <property type="nucleotide sequence ID" value="NZ_CP009538.1"/>
</dbReference>
<dbReference type="RefSeq" id="YP_109734.1">
    <property type="nucleotide sequence ID" value="NC_006350.1"/>
</dbReference>
<dbReference type="SMR" id="Q63Q84"/>
<dbReference type="STRING" id="272560.BPSL3141"/>
<dbReference type="KEGG" id="bps:BPSL3141"/>
<dbReference type="PATRIC" id="fig|272560.51.peg.2102"/>
<dbReference type="eggNOG" id="COG0766">
    <property type="taxonomic scope" value="Bacteria"/>
</dbReference>
<dbReference type="UniPathway" id="UPA00219"/>
<dbReference type="Proteomes" id="UP000000605">
    <property type="component" value="Chromosome 1"/>
</dbReference>
<dbReference type="GO" id="GO:0005737">
    <property type="term" value="C:cytoplasm"/>
    <property type="evidence" value="ECO:0007669"/>
    <property type="project" value="UniProtKB-SubCell"/>
</dbReference>
<dbReference type="GO" id="GO:0008760">
    <property type="term" value="F:UDP-N-acetylglucosamine 1-carboxyvinyltransferase activity"/>
    <property type="evidence" value="ECO:0007669"/>
    <property type="project" value="UniProtKB-UniRule"/>
</dbReference>
<dbReference type="GO" id="GO:0051301">
    <property type="term" value="P:cell division"/>
    <property type="evidence" value="ECO:0007669"/>
    <property type="project" value="UniProtKB-KW"/>
</dbReference>
<dbReference type="GO" id="GO:0071555">
    <property type="term" value="P:cell wall organization"/>
    <property type="evidence" value="ECO:0007669"/>
    <property type="project" value="UniProtKB-KW"/>
</dbReference>
<dbReference type="GO" id="GO:0009252">
    <property type="term" value="P:peptidoglycan biosynthetic process"/>
    <property type="evidence" value="ECO:0007669"/>
    <property type="project" value="UniProtKB-UniRule"/>
</dbReference>
<dbReference type="GO" id="GO:0008360">
    <property type="term" value="P:regulation of cell shape"/>
    <property type="evidence" value="ECO:0007669"/>
    <property type="project" value="UniProtKB-KW"/>
</dbReference>
<dbReference type="GO" id="GO:0019277">
    <property type="term" value="P:UDP-N-acetylgalactosamine biosynthetic process"/>
    <property type="evidence" value="ECO:0007669"/>
    <property type="project" value="InterPro"/>
</dbReference>
<dbReference type="CDD" id="cd01555">
    <property type="entry name" value="UdpNAET"/>
    <property type="match status" value="1"/>
</dbReference>
<dbReference type="FunFam" id="3.65.10.10:FF:000001">
    <property type="entry name" value="UDP-N-acetylglucosamine 1-carboxyvinyltransferase"/>
    <property type="match status" value="1"/>
</dbReference>
<dbReference type="Gene3D" id="3.65.10.10">
    <property type="entry name" value="Enolpyruvate transferase domain"/>
    <property type="match status" value="2"/>
</dbReference>
<dbReference type="HAMAP" id="MF_00111">
    <property type="entry name" value="MurA"/>
    <property type="match status" value="1"/>
</dbReference>
<dbReference type="InterPro" id="IPR001986">
    <property type="entry name" value="Enolpyruvate_Tfrase_dom"/>
</dbReference>
<dbReference type="InterPro" id="IPR036968">
    <property type="entry name" value="Enolpyruvate_Tfrase_sf"/>
</dbReference>
<dbReference type="InterPro" id="IPR050068">
    <property type="entry name" value="MurA_subfamily"/>
</dbReference>
<dbReference type="InterPro" id="IPR013792">
    <property type="entry name" value="RNA3'P_cycl/enolpyr_Trfase_a/b"/>
</dbReference>
<dbReference type="InterPro" id="IPR005750">
    <property type="entry name" value="UDP_GlcNAc_COvinyl_MurA"/>
</dbReference>
<dbReference type="NCBIfam" id="TIGR01072">
    <property type="entry name" value="murA"/>
    <property type="match status" value="1"/>
</dbReference>
<dbReference type="NCBIfam" id="NF006873">
    <property type="entry name" value="PRK09369.1"/>
    <property type="match status" value="1"/>
</dbReference>
<dbReference type="PANTHER" id="PTHR43783">
    <property type="entry name" value="UDP-N-ACETYLGLUCOSAMINE 1-CARBOXYVINYLTRANSFERASE"/>
    <property type="match status" value="1"/>
</dbReference>
<dbReference type="PANTHER" id="PTHR43783:SF1">
    <property type="entry name" value="UDP-N-ACETYLGLUCOSAMINE 1-CARBOXYVINYLTRANSFERASE"/>
    <property type="match status" value="1"/>
</dbReference>
<dbReference type="Pfam" id="PF00275">
    <property type="entry name" value="EPSP_synthase"/>
    <property type="match status" value="1"/>
</dbReference>
<dbReference type="SUPFAM" id="SSF55205">
    <property type="entry name" value="EPT/RTPC-like"/>
    <property type="match status" value="1"/>
</dbReference>
<accession>Q63Q84</accession>
<evidence type="ECO:0000255" key="1">
    <source>
        <dbReference type="HAMAP-Rule" id="MF_00111"/>
    </source>
</evidence>
<evidence type="ECO:0000256" key="2">
    <source>
        <dbReference type="SAM" id="MobiDB-lite"/>
    </source>
</evidence>
<keyword id="KW-0131">Cell cycle</keyword>
<keyword id="KW-0132">Cell division</keyword>
<keyword id="KW-0133">Cell shape</keyword>
<keyword id="KW-0961">Cell wall biogenesis/degradation</keyword>
<keyword id="KW-0963">Cytoplasm</keyword>
<keyword id="KW-0573">Peptidoglycan synthesis</keyword>
<keyword id="KW-0670">Pyruvate</keyword>
<keyword id="KW-1185">Reference proteome</keyword>
<keyword id="KW-0808">Transferase</keyword>
<protein>
    <recommendedName>
        <fullName evidence="1">UDP-N-acetylglucosamine 1-carboxyvinyltransferase</fullName>
        <ecNumber evidence="1">2.5.1.7</ecNumber>
    </recommendedName>
    <alternativeName>
        <fullName evidence="1">Enoylpyruvate transferase</fullName>
    </alternativeName>
    <alternativeName>
        <fullName evidence="1">UDP-N-acetylglucosamine enolpyruvyl transferase</fullName>
        <shortName evidence="1">EPT</shortName>
    </alternativeName>
</protein>
<name>MURA_BURPS</name>
<reference key="1">
    <citation type="journal article" date="2004" name="Proc. Natl. Acad. Sci. U.S.A.">
        <title>Genomic plasticity of the causative agent of melioidosis, Burkholderia pseudomallei.</title>
        <authorList>
            <person name="Holden M.T.G."/>
            <person name="Titball R.W."/>
            <person name="Peacock S.J."/>
            <person name="Cerdeno-Tarraga A.-M."/>
            <person name="Atkins T."/>
            <person name="Crossman L.C."/>
            <person name="Pitt T."/>
            <person name="Churcher C."/>
            <person name="Mungall K.L."/>
            <person name="Bentley S.D."/>
            <person name="Sebaihia M."/>
            <person name="Thomson N.R."/>
            <person name="Bason N."/>
            <person name="Beacham I.R."/>
            <person name="Brooks K."/>
            <person name="Brown K.A."/>
            <person name="Brown N.F."/>
            <person name="Challis G.L."/>
            <person name="Cherevach I."/>
            <person name="Chillingworth T."/>
            <person name="Cronin A."/>
            <person name="Crossett B."/>
            <person name="Davis P."/>
            <person name="DeShazer D."/>
            <person name="Feltwell T."/>
            <person name="Fraser A."/>
            <person name="Hance Z."/>
            <person name="Hauser H."/>
            <person name="Holroyd S."/>
            <person name="Jagels K."/>
            <person name="Keith K.E."/>
            <person name="Maddison M."/>
            <person name="Moule S."/>
            <person name="Price C."/>
            <person name="Quail M.A."/>
            <person name="Rabbinowitsch E."/>
            <person name="Rutherford K."/>
            <person name="Sanders M."/>
            <person name="Simmonds M."/>
            <person name="Songsivilai S."/>
            <person name="Stevens K."/>
            <person name="Tumapa S."/>
            <person name="Vesaratchavest M."/>
            <person name="Whitehead S."/>
            <person name="Yeats C."/>
            <person name="Barrell B.G."/>
            <person name="Oyston P.C.F."/>
            <person name="Parkhill J."/>
        </authorList>
    </citation>
    <scope>NUCLEOTIDE SEQUENCE [LARGE SCALE GENOMIC DNA]</scope>
    <source>
        <strain>K96243</strain>
    </source>
</reference>
<gene>
    <name evidence="1" type="primary">murA</name>
    <name type="ordered locus">BPSL3141</name>
</gene>
<proteinExistence type="inferred from homology"/>
<feature type="chain" id="PRO_0000231182" description="UDP-N-acetylglucosamine 1-carboxyvinyltransferase">
    <location>
        <begin position="1"/>
        <end position="449"/>
    </location>
</feature>
<feature type="region of interest" description="Disordered" evidence="2">
    <location>
        <begin position="1"/>
        <end position="30"/>
    </location>
</feature>
<feature type="compositionally biased region" description="Basic and acidic residues" evidence="2">
    <location>
        <begin position="1"/>
        <end position="12"/>
    </location>
</feature>
<feature type="active site" description="Proton donor" evidence="1">
    <location>
        <position position="145"/>
    </location>
</feature>
<feature type="binding site" evidence="1">
    <location>
        <begin position="51"/>
        <end position="52"/>
    </location>
    <ligand>
        <name>phosphoenolpyruvate</name>
        <dbReference type="ChEBI" id="CHEBI:58702"/>
    </ligand>
</feature>
<feature type="binding site" evidence="1">
    <location>
        <position position="121"/>
    </location>
    <ligand>
        <name>UDP-N-acetyl-alpha-D-glucosamine</name>
        <dbReference type="ChEBI" id="CHEBI:57705"/>
    </ligand>
</feature>
<feature type="binding site" evidence="1">
    <location>
        <begin position="150"/>
        <end position="154"/>
    </location>
    <ligand>
        <name>UDP-N-acetyl-alpha-D-glucosamine</name>
        <dbReference type="ChEBI" id="CHEBI:57705"/>
    </ligand>
</feature>
<feature type="binding site" evidence="1">
    <location>
        <position position="333"/>
    </location>
    <ligand>
        <name>UDP-N-acetyl-alpha-D-glucosamine</name>
        <dbReference type="ChEBI" id="CHEBI:57705"/>
    </ligand>
</feature>
<feature type="binding site" evidence="1">
    <location>
        <position position="355"/>
    </location>
    <ligand>
        <name>UDP-N-acetyl-alpha-D-glucosamine</name>
        <dbReference type="ChEBI" id="CHEBI:57705"/>
    </ligand>
</feature>
<feature type="modified residue" description="2-(S-cysteinyl)pyruvic acid O-phosphothioketal" evidence="1">
    <location>
        <position position="145"/>
    </location>
</feature>
<sequence length="449" mass="47283">MQVTVNEHDAVERVATATPAGNREAHAHGTDKLAIEGGRRLAGEIAVSGAKNAALPILCAGLLSAEPVRLDNVPDLKDVRTTLALLGQMGMREETDGARVVLDASRVDNPVAPYELVKTMRASILVLGPLLARFGYAKVSLPGGCAIGARPVDQHIKGLQAMGAEIHIEHGYIEARAKRLSGARIVTDMITVTGTENLLMAATLADGETVIENAAREPEVTDLAHLLVAMGAKIDGIGTDRLVIQGVERLHGATHAVIPDRIEAGTFLCAVAAAGGDVTLTGMRAHILDAVIDKLREAGATIDEGVDTLRVRMDGRPSAVAIRTSEYPAFPTDMQAQFMALNAVAQGAAQVTETIFENRFMHVQELNRLGANIAVDGNTALVTGVPKLSGASVMATDLRASASLVIAGLCAQGETLVERIYHLDRGYDRMETKLTAVGANVRRISGSEA</sequence>
<organism>
    <name type="scientific">Burkholderia pseudomallei (strain K96243)</name>
    <dbReference type="NCBI Taxonomy" id="272560"/>
    <lineage>
        <taxon>Bacteria</taxon>
        <taxon>Pseudomonadati</taxon>
        <taxon>Pseudomonadota</taxon>
        <taxon>Betaproteobacteria</taxon>
        <taxon>Burkholderiales</taxon>
        <taxon>Burkholderiaceae</taxon>
        <taxon>Burkholderia</taxon>
        <taxon>pseudomallei group</taxon>
    </lineage>
</organism>
<comment type="function">
    <text evidence="1">Cell wall formation. Adds enolpyruvyl to UDP-N-acetylglucosamine.</text>
</comment>
<comment type="catalytic activity">
    <reaction evidence="1">
        <text>phosphoenolpyruvate + UDP-N-acetyl-alpha-D-glucosamine = UDP-N-acetyl-3-O-(1-carboxyvinyl)-alpha-D-glucosamine + phosphate</text>
        <dbReference type="Rhea" id="RHEA:18681"/>
        <dbReference type="ChEBI" id="CHEBI:43474"/>
        <dbReference type="ChEBI" id="CHEBI:57705"/>
        <dbReference type="ChEBI" id="CHEBI:58702"/>
        <dbReference type="ChEBI" id="CHEBI:68483"/>
        <dbReference type="EC" id="2.5.1.7"/>
    </reaction>
</comment>
<comment type="pathway">
    <text evidence="1">Cell wall biogenesis; peptidoglycan biosynthesis.</text>
</comment>
<comment type="subcellular location">
    <subcellularLocation>
        <location evidence="1">Cytoplasm</location>
    </subcellularLocation>
</comment>
<comment type="similarity">
    <text evidence="1">Belongs to the EPSP synthase family. MurA subfamily.</text>
</comment>